<evidence type="ECO:0000250" key="1"/>
<evidence type="ECO:0000250" key="2">
    <source>
        <dbReference type="UniProtKB" id="P03523"/>
    </source>
</evidence>
<evidence type="ECO:0000250" key="3">
    <source>
        <dbReference type="UniProtKB" id="P28887"/>
    </source>
</evidence>
<evidence type="ECO:0000255" key="4">
    <source>
        <dbReference type="PROSITE-ProRule" id="PRU00539"/>
    </source>
</evidence>
<evidence type="ECO:0000255" key="5">
    <source>
        <dbReference type="PROSITE-ProRule" id="PRU00923"/>
    </source>
</evidence>
<evidence type="ECO:0000256" key="6">
    <source>
        <dbReference type="SAM" id="MobiDB-lite"/>
    </source>
</evidence>
<evidence type="ECO:0000305" key="7"/>
<proteinExistence type="inferred from homology"/>
<gene>
    <name type="primary">L</name>
</gene>
<accession>Q4F8Z9</accession>
<organismHost>
    <name type="scientific">Homo sapiens</name>
    <name type="common">Human</name>
    <dbReference type="NCBI Taxonomy" id="9606"/>
</organismHost>
<organismHost>
    <name type="scientific">Mammalia</name>
    <dbReference type="NCBI Taxonomy" id="40674"/>
</organismHost>
<dbReference type="EC" id="2.7.7.48" evidence="3"/>
<dbReference type="EC" id="3.6.1.-" evidence="2"/>
<dbReference type="EC" id="2.7.7.88" evidence="2"/>
<dbReference type="EC" id="2.1.1.375" evidence="2"/>
<dbReference type="EMBL" id="DQ099525">
    <property type="protein sequence ID" value="AAZ07895.1"/>
    <property type="molecule type" value="Genomic_RNA"/>
</dbReference>
<dbReference type="SMR" id="Q4F8Z9"/>
<dbReference type="Proteomes" id="UP000008617">
    <property type="component" value="Genome"/>
</dbReference>
<dbReference type="GO" id="GO:0030430">
    <property type="term" value="C:host cell cytoplasm"/>
    <property type="evidence" value="ECO:0007669"/>
    <property type="project" value="UniProtKB-SubCell"/>
</dbReference>
<dbReference type="GO" id="GO:0044423">
    <property type="term" value="C:virion component"/>
    <property type="evidence" value="ECO:0007669"/>
    <property type="project" value="UniProtKB-KW"/>
</dbReference>
<dbReference type="GO" id="GO:0005524">
    <property type="term" value="F:ATP binding"/>
    <property type="evidence" value="ECO:0007669"/>
    <property type="project" value="UniProtKB-KW"/>
</dbReference>
<dbReference type="GO" id="GO:0003924">
    <property type="term" value="F:GTPase activity"/>
    <property type="evidence" value="ECO:0007669"/>
    <property type="project" value="RHEA"/>
</dbReference>
<dbReference type="GO" id="GO:0004482">
    <property type="term" value="F:mRNA 5'-cap (guanine-N7-)-methyltransferase activity"/>
    <property type="evidence" value="ECO:0007669"/>
    <property type="project" value="InterPro"/>
</dbReference>
<dbReference type="GO" id="GO:0003968">
    <property type="term" value="F:RNA-directed RNA polymerase activity"/>
    <property type="evidence" value="ECO:0007669"/>
    <property type="project" value="UniProtKB-KW"/>
</dbReference>
<dbReference type="GO" id="GO:0039689">
    <property type="term" value="P:negative stranded viral RNA replication"/>
    <property type="evidence" value="ECO:0000250"/>
    <property type="project" value="UniProtKB"/>
</dbReference>
<dbReference type="InterPro" id="IPR039530">
    <property type="entry name" value="L_methyltransferase_rhabdo"/>
</dbReference>
<dbReference type="InterPro" id="IPR039736">
    <property type="entry name" value="L_poly_C"/>
</dbReference>
<dbReference type="InterPro" id="IPR048398">
    <property type="entry name" value="Methyltrans_Mon_C"/>
</dbReference>
<dbReference type="InterPro" id="IPR048397">
    <property type="entry name" value="Methyltrans_Mon_CD"/>
</dbReference>
<dbReference type="InterPro" id="IPR026890">
    <property type="entry name" value="Mononeg_mRNAcap"/>
</dbReference>
<dbReference type="InterPro" id="IPR014023">
    <property type="entry name" value="Mononeg_RNA_pol_cat"/>
</dbReference>
<dbReference type="InterPro" id="IPR017234">
    <property type="entry name" value="RNA-dir_pol_rhabdovirus"/>
</dbReference>
<dbReference type="NCBIfam" id="TIGR04198">
    <property type="entry name" value="paramyx_RNAcap"/>
    <property type="match status" value="1"/>
</dbReference>
<dbReference type="Pfam" id="PF21080">
    <property type="entry name" value="Methyltrans_Mon_1st"/>
    <property type="match status" value="1"/>
</dbReference>
<dbReference type="Pfam" id="PF14314">
    <property type="entry name" value="Methyltrans_Mon_2nd"/>
    <property type="match status" value="1"/>
</dbReference>
<dbReference type="Pfam" id="PF21081">
    <property type="entry name" value="Methyltrans_Mon_3rd"/>
    <property type="match status" value="1"/>
</dbReference>
<dbReference type="Pfam" id="PF14318">
    <property type="entry name" value="Mononeg_mRNAcap"/>
    <property type="match status" value="1"/>
</dbReference>
<dbReference type="Pfam" id="PF00946">
    <property type="entry name" value="Mononeg_RNA_pol"/>
    <property type="match status" value="1"/>
</dbReference>
<dbReference type="PIRSF" id="PIRSF037546">
    <property type="entry name" value="RNA_pol_RhabdoV_sub"/>
    <property type="match status" value="1"/>
</dbReference>
<dbReference type="PROSITE" id="PS50526">
    <property type="entry name" value="RDRP_SSRNA_NEG_NONSEG"/>
    <property type="match status" value="1"/>
</dbReference>
<dbReference type="PROSITE" id="PS51590">
    <property type="entry name" value="SAM_MT_MNV_L"/>
    <property type="match status" value="1"/>
</dbReference>
<sequence length="2127" mass="242915">MLDPGEVYDDPIDPIESEAEPRGTPTVPNILRNSDYNLNSPLIEDPAKLMLEWLKTGNRPYRMALTDNCSRSYKVLKDYFKKVDLGSLKVGGTAAQSMVSLWLCGAHSESNRSRRCITDLAHFYSKSSPIEKLLNCTLGNRGLRIPPEGVLNCLERVNYDKAFGRYLANTYSSYLFFHVITLYMNALDWEEEKTILALWKDITSVDTEKDLVKFKDQIWGLLIVTKDFVYSQSSNCLFDRNYTLMLKDLFLSRFNSLMILLSPPEPRYSDDLISQLCQLYIAGDQVLSMCGNSGYEVIKILEPYVVNSLVQRAEKFRPLIHPLGDFPMFIKDKVNQLEGTFGPSAKRFFRVLDQFDNIHDLVFVYGCYRHWGHPYIDYRKGLSKLYDQVHIKKVIDKSYQECLASDLARRILRWGFDKYSKWYLDSRFLARDHPLTPYVKTQTWPPKHIVDLVGDTWHKLPITQIFEIPESMDPSEILDDKSHSFTRTRLASWLSENRGGPVPSEKVIITALSKPPVNPREFLKSIDLGGLPDEDLIIGLKPKERELKIEGRFFALMSWNLRLYFVITEKLLANYILPLFDALTMTDNLNKVFKKLIDRVTGQGLLDYSRVTYAFHLDYEKWNNHQRLESTEDVFSVLDQVFGLKRVFSRTHEFFQKSWIYYSDRSDLIGLWEDQIYCLDMSNGPTCWNGQDGGLEGLRQKGWSLVSLLMIDRESQTRNTRTKILAQGDNQVLCPTYMLSPGLSQEGLLYELESISRNALSIYRAIEEGASKLGLIIKKEETMCSYDFLIYGKTPLFRGNILVPESKRWARVSCISNDQIVNLANIMSTVSTNALTVAQHSQSLIKPMRDFLLMSVQAVFHYLLFSPILKGRVYKILSAEGESFLLAMSRIIYLDPSLGGVSGMSLGRFHIRQFSDPVSEGLSFWREIWLGSHESWIHALCQEAGNPDLGERTLESFTRLLEDPTTLNIKGGASPTILLKDAIRKALYDEVDKVENSEFREAILLSKTHRDNFILFLKSVEPLFPRFLSELFSSSFLGIPESIIGLIQNSRTIRRQFRKSLSRTLEESFYNSEIHGINRITQTPQRVGRVWPCSSERADLLREISWGRKVVGTTVPHPSEMLELFPKSSISCTCGATGGGNPRVSVSVLPSFDQSFFSRGPLKGYLGSSTSMSTQLFHAWEKVTNVHVVKRALSLKESINWFINRNSNLAQTLIGNIMSLTGPDFPLEEAPVFKRTGSALHRFKSARYSEGGYSSVCPNLLSHISVSTDTMSDLTQNGKNYDFMFQPLMLYAQTWTSELVQRDTRLRDSTFHWHLRLNRCVRPIDDITLETSQIFEFPDVSKRISRMVSGAVPQFQKLPDIRLRPGDFESLSGREKSRHIGSAQGLLYSILVAIHDSGYNDGTIFPVNIYGKVSPRDYLRGLARGILIGSSICFLTRMTNININRPLELISGVISYILLRLDNHPSLYIMLREPSLRGEIFSIPQKIPAAYPTTMREGNRSILCYLQHVLRYEREAITASPENDWLWIFSDFRSVKMTYLTLMTYQSHLLLQRVERNLSKSMRATLRQMSSLMRQVLGGHGEDTLESDDDIQRLLKDSLRKTRWVDQEVRHAARTMNGDYSPDKKVSHKAGCSEWVCSAQQIAVSTSANPAPVSELDIRALSKRFQNPLISGLRVVQWATGAHYKLKPILDDLNVFPSLCLVIGDGSGGISRAVLNMFPDSKLVFNSLLEVNDLMASGTHPLPPSAIMSGGDDIISRVIDFDSIWEKPSDLRNSATWRYFQSVQKQVNMSYDLIICDAEVTDIASINRITLLMSDFALSIDGPLYLVFKTYGTMLVNPDYKAIQHLSRAFPSVTGFVTQVTSSFSSELYLRFSKRGKFFRDAEYLTSSTLREMSLVLFNCSSPKSEMQRARSLNYQDLVRGFPEEIISNPYNEMIITLIDNDVESFLVHKMVDDLELQRGTLSKVAIIISIMIVFSNRVFNISKPLTDPLFYPPSDPKILRHFNICCSTMMYLSTALGDVPSFARLHDLYNRPITYYFRKQVIRGNIYLSWSWSDDTPVFKRVACNSSLSLSSHWIRLIYKIVKTTRLIGSIKDLSGEVERHLHGYNRWITLEDIRSRSSLLDYSCL</sequence>
<reference key="1">
    <citation type="submission" date="2005-06" db="EMBL/GenBank/DDBJ databases">
        <title>Characterization of rabies virus vaccine strains.</title>
        <authorList>
            <person name="Stallkamp I."/>
            <person name="Lopez-Yomayuza C.C."/>
            <person name="Thiel H.-J."/>
        </authorList>
    </citation>
    <scope>NUCLEOTIDE SEQUENCE [GENOMIC RNA]</scope>
    <source>
        <strain>PM1503</strain>
    </source>
</reference>
<protein>
    <recommendedName>
        <fullName>Large structural protein</fullName>
        <shortName>Protein L</shortName>
    </recommendedName>
    <alternativeName>
        <fullName>Replicase</fullName>
    </alternativeName>
    <alternativeName>
        <fullName>Transcriptase</fullName>
    </alternativeName>
    <domain>
        <recommendedName>
            <fullName>RNA-directed RNA polymerase</fullName>
            <ecNumber evidence="3">2.7.7.48</ecNumber>
        </recommendedName>
    </domain>
    <domain>
        <recommendedName>
            <fullName evidence="2">GTP phosphohydrolase</fullName>
            <ecNumber evidence="2">3.6.1.-</ecNumber>
        </recommendedName>
    </domain>
    <domain>
        <recommendedName>
            <fullName evidence="7">GDP polyribonucleotidyltransferase</fullName>
            <ecNumber evidence="2">2.7.7.88</ecNumber>
        </recommendedName>
        <alternativeName>
            <fullName evidence="7">PRNTase</fullName>
        </alternativeName>
    </domain>
    <domain>
        <recommendedName>
            <fullName evidence="7">mRNA cap methyltransferase</fullName>
            <ecNumber evidence="2">2.1.1.375</ecNumber>
        </recommendedName>
        <alternativeName>
            <fullName evidence="2">mRNA (guanine-N(7)-)-methyltransferase</fullName>
            <shortName evidence="2">G-N7-MTase</shortName>
        </alternativeName>
        <alternativeName>
            <fullName evidence="2">mRNA (nucleoside-2'-O-)-methyltransferase</fullName>
            <shortName evidence="2">N1-2'-O-MTase</shortName>
        </alternativeName>
    </domain>
</protein>
<comment type="function">
    <text evidence="2">RNA-directed RNA polymerase that catalyzes the transcription of viral mRNAs, their capping and polyadenylation. The template is composed of the viral RNA tightly encapsidated by the nucleoprotein (N). The viral polymerase binds to the genomic RNA at the 3' leader promoter, and transcribes subsequently all viral mRNAs with a decreasing efficiency. The first gene is the most transcribed, and the last the least transcribed. The viral phosphoprotein acts as a processivity factor. Capping is concomitant with initiation of mRNA transcription. Indeed, a GDP polyribonucleotidyl transferase (PRNTase) adds the cap structure when the nascent RNA chain length has reached few nucleotides. Ribose 2'-O methylation of viral mRNA cap precedes and facilitates subsequent guanine-N-7 methylation, both activities being carried by the viral polymerase. Polyadenylation of mRNAs occur by a stuttering mechanism at a slipery stop site present at the end viral genes. After finishing transcription of a mRNA, the polymerase can resume transcription of the downstream gene.</text>
</comment>
<comment type="function">
    <text evidence="2">RNA-directed RNA polymerase that catalyzes the replication of viral genomic RNA. The template is composed of the viral RNA tightly encapsidated by the nucleoprotein (N). The replicase mode is dependent on intracellular N protein concentration. In this mode, the polymerase replicates the whole viral genome without recognizing transcriptional signals, and the replicated genome is not caped or polyadenylated.</text>
</comment>
<comment type="catalytic activity">
    <reaction evidence="4">
        <text>RNA(n) + a ribonucleoside 5'-triphosphate = RNA(n+1) + diphosphate</text>
        <dbReference type="Rhea" id="RHEA:21248"/>
        <dbReference type="Rhea" id="RHEA-COMP:14527"/>
        <dbReference type="Rhea" id="RHEA-COMP:17342"/>
        <dbReference type="ChEBI" id="CHEBI:33019"/>
        <dbReference type="ChEBI" id="CHEBI:61557"/>
        <dbReference type="ChEBI" id="CHEBI:140395"/>
        <dbReference type="EC" id="2.7.7.48"/>
    </reaction>
</comment>
<comment type="catalytic activity">
    <reaction evidence="2">
        <text>a 5'-end (5'-triphosphoguanosine)-adenylyl-adenylyl-cytidylyl-adenosine in mRNA + 2 S-adenosyl-L-methionine = a 5'-end (N(7)-methyl 5'-triphosphoguanosine)-(2'-O-methyladenylyl)-adenylyl-cytidylyl-adenosine in mRNA + 2 S-adenosyl-L-homocysteine + H(+)</text>
        <dbReference type="Rhea" id="RHEA:65376"/>
        <dbReference type="Rhea" id="RHEA-COMP:16797"/>
        <dbReference type="Rhea" id="RHEA-COMP:16798"/>
        <dbReference type="ChEBI" id="CHEBI:15378"/>
        <dbReference type="ChEBI" id="CHEBI:57856"/>
        <dbReference type="ChEBI" id="CHEBI:59789"/>
        <dbReference type="ChEBI" id="CHEBI:156483"/>
        <dbReference type="ChEBI" id="CHEBI:156484"/>
        <dbReference type="EC" id="2.1.1.375"/>
    </reaction>
</comment>
<comment type="catalytic activity">
    <reaction evidence="2">
        <text>a 5'-end (5'-triphosphoguanosine)-adenylyl-adenylyl-cytidylyl-adenosine in mRNA + S-adenosyl-L-methionine = a 5'-end (5'-triphosphoguanosine)-(2'-O-methyladenylyl)-adenylyl-cytidylyl-adenosine in mRNA + S-adenosyl-L-homocysteine + H(+)</text>
        <dbReference type="Rhea" id="RHEA:65380"/>
        <dbReference type="Rhea" id="RHEA-COMP:16797"/>
        <dbReference type="Rhea" id="RHEA-COMP:16801"/>
        <dbReference type="ChEBI" id="CHEBI:15378"/>
        <dbReference type="ChEBI" id="CHEBI:57856"/>
        <dbReference type="ChEBI" id="CHEBI:59789"/>
        <dbReference type="ChEBI" id="CHEBI:156482"/>
        <dbReference type="ChEBI" id="CHEBI:156484"/>
    </reaction>
</comment>
<comment type="catalytic activity">
    <reaction evidence="3">
        <text>a 5'-end triphospho-adenylyl-adenylyl-cytidylyl-adenosine in mRNA + GDP + H(+) = a 5'-end (5'-triphosphoguanosine)-adenylyl-adenylyl-cytidylyl-adenosine in mRNA + diphosphate</text>
        <dbReference type="Rhea" id="RHEA:65436"/>
        <dbReference type="Rhea" id="RHEA-COMP:16797"/>
        <dbReference type="Rhea" id="RHEA-COMP:16799"/>
        <dbReference type="ChEBI" id="CHEBI:15378"/>
        <dbReference type="ChEBI" id="CHEBI:33019"/>
        <dbReference type="ChEBI" id="CHEBI:58189"/>
        <dbReference type="ChEBI" id="CHEBI:156484"/>
        <dbReference type="ChEBI" id="CHEBI:156503"/>
        <dbReference type="EC" id="2.7.7.88"/>
    </reaction>
</comment>
<comment type="catalytic activity">
    <reaction evidence="2">
        <text>a 5'-end (5'-triphosphoguanosine)-(2'-O-methyladenylyl)-adenylyl-cytidylyl-adenosine in mRNA + S-adenosyl-L-methionine = a 5'-end (N(7)-methyl 5'-triphosphoguanosine)-(2'-O-methyladenylyl)-adenylyl-cytidylyl-adenosine in mRNA + S-adenosyl-L-homocysteine</text>
        <dbReference type="Rhea" id="RHEA:65440"/>
        <dbReference type="Rhea" id="RHEA-COMP:16798"/>
        <dbReference type="Rhea" id="RHEA-COMP:16801"/>
        <dbReference type="ChEBI" id="CHEBI:57856"/>
        <dbReference type="ChEBI" id="CHEBI:59789"/>
        <dbReference type="ChEBI" id="CHEBI:156482"/>
        <dbReference type="ChEBI" id="CHEBI:156483"/>
    </reaction>
</comment>
<comment type="catalytic activity">
    <reaction evidence="3">
        <text>GTP + H2O = GDP + phosphate + H(+)</text>
        <dbReference type="Rhea" id="RHEA:19669"/>
        <dbReference type="ChEBI" id="CHEBI:15377"/>
        <dbReference type="ChEBI" id="CHEBI:15378"/>
        <dbReference type="ChEBI" id="CHEBI:37565"/>
        <dbReference type="ChEBI" id="CHEBI:43474"/>
        <dbReference type="ChEBI" id="CHEBI:58189"/>
    </reaction>
</comment>
<comment type="subunit">
    <text evidence="2">May form homodimer. Interacts with the P protein.</text>
</comment>
<comment type="subcellular location">
    <subcellularLocation>
        <location evidence="2">Virion</location>
    </subcellularLocation>
    <subcellularLocation>
        <location evidence="2">Host cytoplasm</location>
    </subcellularLocation>
    <text evidence="2">L and P are packaged asymmetrically towards the blunt end of the virus.</text>
</comment>
<comment type="similarity">
    <text evidence="7">Belongs to the rhabdoviruses protein L family.</text>
</comment>
<organism>
    <name type="scientific">Rabies virus (strain PM1503/AVO1)</name>
    <name type="common">RABV</name>
    <dbReference type="NCBI Taxonomy" id="11293"/>
    <lineage>
        <taxon>Viruses</taxon>
        <taxon>Riboviria</taxon>
        <taxon>Orthornavirae</taxon>
        <taxon>Negarnaviricota</taxon>
        <taxon>Haploviricotina</taxon>
        <taxon>Monjiviricetes</taxon>
        <taxon>Mononegavirales</taxon>
        <taxon>Rhabdoviridae</taxon>
        <taxon>Alpharhabdovirinae</taxon>
        <taxon>Lyssavirus</taxon>
        <taxon>Lyssavirus rabies</taxon>
    </lineage>
</organism>
<name>L_RABVA</name>
<feature type="chain" id="PRO_0000294417" description="Large structural protein">
    <location>
        <begin position="1"/>
        <end position="2127"/>
    </location>
</feature>
<feature type="domain" description="RdRp catalytic" evidence="4">
    <location>
        <begin position="611"/>
        <end position="799"/>
    </location>
</feature>
<feature type="domain" description="Mononegavirus-type SAM-dependent 2'-O-MTase" evidence="5">
    <location>
        <begin position="1674"/>
        <end position="1871"/>
    </location>
</feature>
<feature type="region of interest" description="Disordered" evidence="6">
    <location>
        <begin position="1"/>
        <end position="27"/>
    </location>
</feature>
<feature type="region of interest" description="Interaction with P protein" evidence="1">
    <location>
        <begin position="1562"/>
        <end position="2127"/>
    </location>
</feature>
<feature type="compositionally biased region" description="Acidic residues" evidence="6">
    <location>
        <begin position="1"/>
        <end position="18"/>
    </location>
</feature>
<keyword id="KW-0067">ATP-binding</keyword>
<keyword id="KW-1035">Host cytoplasm</keyword>
<keyword id="KW-0378">Hydrolase</keyword>
<keyword id="KW-0489">Methyltransferase</keyword>
<keyword id="KW-0506">mRNA capping</keyword>
<keyword id="KW-0507">mRNA processing</keyword>
<keyword id="KW-0511">Multifunctional enzyme</keyword>
<keyword id="KW-0547">Nucleotide-binding</keyword>
<keyword id="KW-0548">Nucleotidyltransferase</keyword>
<keyword id="KW-0696">RNA-directed RNA polymerase</keyword>
<keyword id="KW-0949">S-adenosyl-L-methionine</keyword>
<keyword id="KW-0808">Transferase</keyword>
<keyword id="KW-0693">Viral RNA replication</keyword>
<keyword id="KW-0946">Virion</keyword>